<feature type="signal peptide" evidence="2">
    <location>
        <begin position="1"/>
        <end position="23"/>
    </location>
</feature>
<feature type="chain" id="PRO_0000017167" description="BPI fold-containing family C protein">
    <location>
        <begin position="24"/>
        <end position="509"/>
    </location>
</feature>
<feature type="glycosylation site" description="N-linked (GlcNAc...) asparagine" evidence="2">
    <location>
        <position position="63"/>
    </location>
</feature>
<feature type="glycosylation site" description="N-linked (GlcNAc...) asparagine" evidence="2">
    <location>
        <position position="79"/>
    </location>
</feature>
<feature type="glycosylation site" description="N-linked (GlcNAc...) asparagine" evidence="2">
    <location>
        <position position="92"/>
    </location>
</feature>
<feature type="glycosylation site" description="N-linked (GlcNAc...) asparagine" evidence="2">
    <location>
        <position position="113"/>
    </location>
</feature>
<feature type="glycosylation site" description="N-linked (GlcNAc...) asparagine" evidence="2">
    <location>
        <position position="117"/>
    </location>
</feature>
<feature type="glycosylation site" description="N-linked (GlcNAc...) asparagine" evidence="2">
    <location>
        <position position="215"/>
    </location>
</feature>
<feature type="glycosylation site" description="N-linked (GlcNAc...) asparagine" evidence="2">
    <location>
        <position position="227"/>
    </location>
</feature>
<feature type="glycosylation site" description="N-linked (GlcNAc...) asparagine" evidence="2">
    <location>
        <position position="357"/>
    </location>
</feature>
<feature type="glycosylation site" description="N-linked (GlcNAc...) asparagine" evidence="2">
    <location>
        <position position="374"/>
    </location>
</feature>
<feature type="glycosylation site" description="N-linked (GlcNAc...) asparagine" evidence="2">
    <location>
        <position position="457"/>
    </location>
</feature>
<feature type="disulfide bond" evidence="1">
    <location>
        <begin position="161"/>
        <end position="202"/>
    </location>
</feature>
<gene>
    <name type="primary">Bpifc</name>
    <name type="synonym">Bpil2</name>
</gene>
<evidence type="ECO:0000250" key="1">
    <source>
        <dbReference type="UniProtKB" id="P17213"/>
    </source>
</evidence>
<evidence type="ECO:0000255" key="2"/>
<evidence type="ECO:0000305" key="3"/>
<comment type="subcellular location">
    <subcellularLocation>
        <location evidence="1">Secreted</location>
    </subcellularLocation>
</comment>
<comment type="similarity">
    <text evidence="3">Belongs to the BPI/LBP/Plunc superfamily. BPI/LBP family.</text>
</comment>
<protein>
    <recommendedName>
        <fullName>BPI fold-containing family C protein</fullName>
    </recommendedName>
    <alternativeName>
        <fullName>Bactericidal/permeability-increasing protein-like 2</fullName>
    </alternativeName>
</protein>
<dbReference type="EMBL" id="AK028764">
    <property type="protein sequence ID" value="BAC26108.1"/>
    <property type="molecule type" value="mRNA"/>
</dbReference>
<dbReference type="RefSeq" id="NP_808440.2">
    <property type="nucleotide sequence ID" value="NM_177772.4"/>
</dbReference>
<dbReference type="SMR" id="Q8C186"/>
<dbReference type="FunCoup" id="Q8C186">
    <property type="interactions" value="225"/>
</dbReference>
<dbReference type="STRING" id="10090.ENSMUSP00000063107"/>
<dbReference type="GlyCosmos" id="Q8C186">
    <property type="glycosylation" value="10 sites, No reported glycans"/>
</dbReference>
<dbReference type="GlyGen" id="Q8C186">
    <property type="glycosylation" value="10 sites"/>
</dbReference>
<dbReference type="PhosphoSitePlus" id="Q8C186"/>
<dbReference type="jPOST" id="Q8C186"/>
<dbReference type="PaxDb" id="10090-ENSMUSP00000063107"/>
<dbReference type="ProteomicsDB" id="265229"/>
<dbReference type="DNASU" id="270757"/>
<dbReference type="GeneID" id="270757"/>
<dbReference type="KEGG" id="mmu:270757"/>
<dbReference type="AGR" id="MGI:3026884"/>
<dbReference type="CTD" id="254240"/>
<dbReference type="MGI" id="MGI:3026884">
    <property type="gene designation" value="Bpifc"/>
</dbReference>
<dbReference type="eggNOG" id="KOG4160">
    <property type="taxonomic scope" value="Eukaryota"/>
</dbReference>
<dbReference type="InParanoid" id="Q8C186"/>
<dbReference type="OrthoDB" id="9938407at2759"/>
<dbReference type="BioGRID-ORCS" id="270757">
    <property type="hits" value="2 hits in 77 CRISPR screens"/>
</dbReference>
<dbReference type="PRO" id="PR:Q8C186"/>
<dbReference type="Proteomes" id="UP000000589">
    <property type="component" value="Unplaced"/>
</dbReference>
<dbReference type="RNAct" id="Q8C186">
    <property type="molecule type" value="protein"/>
</dbReference>
<dbReference type="GO" id="GO:0005615">
    <property type="term" value="C:extracellular space"/>
    <property type="evidence" value="ECO:0007669"/>
    <property type="project" value="InterPro"/>
</dbReference>
<dbReference type="GO" id="GO:0008289">
    <property type="term" value="F:lipid binding"/>
    <property type="evidence" value="ECO:0007669"/>
    <property type="project" value="InterPro"/>
</dbReference>
<dbReference type="GO" id="GO:0045087">
    <property type="term" value="P:innate immune response"/>
    <property type="evidence" value="ECO:0007669"/>
    <property type="project" value="UniProtKB-KW"/>
</dbReference>
<dbReference type="FunFam" id="3.15.20.10:FF:000001">
    <property type="entry name" value="Phospholipid transfer protein"/>
    <property type="match status" value="1"/>
</dbReference>
<dbReference type="FunFam" id="3.15.10.10:FF:000001">
    <property type="entry name" value="phospholipid transfer protein-like"/>
    <property type="match status" value="1"/>
</dbReference>
<dbReference type="Gene3D" id="3.15.10.10">
    <property type="entry name" value="Bactericidal permeability-increasing protein, domain 1"/>
    <property type="match status" value="1"/>
</dbReference>
<dbReference type="Gene3D" id="3.15.20.10">
    <property type="entry name" value="Bactericidal permeability-increasing protein, domain 2"/>
    <property type="match status" value="1"/>
</dbReference>
<dbReference type="InterPro" id="IPR017943">
    <property type="entry name" value="Bactericidal_perm-incr_a/b_dom"/>
</dbReference>
<dbReference type="InterPro" id="IPR030675">
    <property type="entry name" value="BPI/LBP"/>
</dbReference>
<dbReference type="InterPro" id="IPR032942">
    <property type="entry name" value="BPI/LBP/Plunc"/>
</dbReference>
<dbReference type="InterPro" id="IPR001124">
    <property type="entry name" value="Lipid-bd_serum_glycop_C"/>
</dbReference>
<dbReference type="InterPro" id="IPR017954">
    <property type="entry name" value="Lipid-bd_serum_glycop_CS"/>
</dbReference>
<dbReference type="InterPro" id="IPR017942">
    <property type="entry name" value="Lipid-bd_serum_glycop_N"/>
</dbReference>
<dbReference type="PANTHER" id="PTHR10504">
    <property type="entry name" value="BACTERICIDAL PERMEABILITY-INCREASING BPI PROTEIN-RELATED"/>
    <property type="match status" value="1"/>
</dbReference>
<dbReference type="PANTHER" id="PTHR10504:SF17">
    <property type="entry name" value="BPI FOLD-CONTAINING FAMILY C PROTEIN"/>
    <property type="match status" value="1"/>
</dbReference>
<dbReference type="Pfam" id="PF01273">
    <property type="entry name" value="LBP_BPI_CETP"/>
    <property type="match status" value="1"/>
</dbReference>
<dbReference type="Pfam" id="PF02886">
    <property type="entry name" value="LBP_BPI_CETP_C"/>
    <property type="match status" value="1"/>
</dbReference>
<dbReference type="PIRSF" id="PIRSF002417">
    <property type="entry name" value="Lipid_binding_protein"/>
    <property type="match status" value="1"/>
</dbReference>
<dbReference type="SMART" id="SM00328">
    <property type="entry name" value="BPI1"/>
    <property type="match status" value="1"/>
</dbReference>
<dbReference type="SMART" id="SM00329">
    <property type="entry name" value="BPI2"/>
    <property type="match status" value="1"/>
</dbReference>
<dbReference type="SUPFAM" id="SSF55394">
    <property type="entry name" value="Bactericidal permeability-increasing protein, BPI"/>
    <property type="match status" value="2"/>
</dbReference>
<dbReference type="PROSITE" id="PS00400">
    <property type="entry name" value="LBP_BPI_CETP"/>
    <property type="match status" value="1"/>
</dbReference>
<proteinExistence type="evidence at transcript level"/>
<keyword id="KW-1015">Disulfide bond</keyword>
<keyword id="KW-0325">Glycoprotein</keyword>
<keyword id="KW-0391">Immunity</keyword>
<keyword id="KW-0399">Innate immunity</keyword>
<keyword id="KW-1185">Reference proteome</keyword>
<keyword id="KW-0964">Secreted</keyword>
<keyword id="KW-0732">Signal</keyword>
<accession>Q8C186</accession>
<organism>
    <name type="scientific">Mus musculus</name>
    <name type="common">Mouse</name>
    <dbReference type="NCBI Taxonomy" id="10090"/>
    <lineage>
        <taxon>Eukaryota</taxon>
        <taxon>Metazoa</taxon>
        <taxon>Chordata</taxon>
        <taxon>Craniata</taxon>
        <taxon>Vertebrata</taxon>
        <taxon>Euteleostomi</taxon>
        <taxon>Mammalia</taxon>
        <taxon>Eutheria</taxon>
        <taxon>Euarchontoglires</taxon>
        <taxon>Glires</taxon>
        <taxon>Rodentia</taxon>
        <taxon>Myomorpha</taxon>
        <taxon>Muroidea</taxon>
        <taxon>Muridae</taxon>
        <taxon>Murinae</taxon>
        <taxon>Mus</taxon>
        <taxon>Mus</taxon>
    </lineage>
</organism>
<reference key="1">
    <citation type="journal article" date="2005" name="Science">
        <title>The transcriptional landscape of the mammalian genome.</title>
        <authorList>
            <person name="Carninci P."/>
            <person name="Kasukawa T."/>
            <person name="Katayama S."/>
            <person name="Gough J."/>
            <person name="Frith M.C."/>
            <person name="Maeda N."/>
            <person name="Oyama R."/>
            <person name="Ravasi T."/>
            <person name="Lenhard B."/>
            <person name="Wells C."/>
            <person name="Kodzius R."/>
            <person name="Shimokawa K."/>
            <person name="Bajic V.B."/>
            <person name="Brenner S.E."/>
            <person name="Batalov S."/>
            <person name="Forrest A.R."/>
            <person name="Zavolan M."/>
            <person name="Davis M.J."/>
            <person name="Wilming L.G."/>
            <person name="Aidinis V."/>
            <person name="Allen J.E."/>
            <person name="Ambesi-Impiombato A."/>
            <person name="Apweiler R."/>
            <person name="Aturaliya R.N."/>
            <person name="Bailey T.L."/>
            <person name="Bansal M."/>
            <person name="Baxter L."/>
            <person name="Beisel K.W."/>
            <person name="Bersano T."/>
            <person name="Bono H."/>
            <person name="Chalk A.M."/>
            <person name="Chiu K.P."/>
            <person name="Choudhary V."/>
            <person name="Christoffels A."/>
            <person name="Clutterbuck D.R."/>
            <person name="Crowe M.L."/>
            <person name="Dalla E."/>
            <person name="Dalrymple B.P."/>
            <person name="de Bono B."/>
            <person name="Della Gatta G."/>
            <person name="di Bernardo D."/>
            <person name="Down T."/>
            <person name="Engstrom P."/>
            <person name="Fagiolini M."/>
            <person name="Faulkner G."/>
            <person name="Fletcher C.F."/>
            <person name="Fukushima T."/>
            <person name="Furuno M."/>
            <person name="Futaki S."/>
            <person name="Gariboldi M."/>
            <person name="Georgii-Hemming P."/>
            <person name="Gingeras T.R."/>
            <person name="Gojobori T."/>
            <person name="Green R.E."/>
            <person name="Gustincich S."/>
            <person name="Harbers M."/>
            <person name="Hayashi Y."/>
            <person name="Hensch T.K."/>
            <person name="Hirokawa N."/>
            <person name="Hill D."/>
            <person name="Huminiecki L."/>
            <person name="Iacono M."/>
            <person name="Ikeo K."/>
            <person name="Iwama A."/>
            <person name="Ishikawa T."/>
            <person name="Jakt M."/>
            <person name="Kanapin A."/>
            <person name="Katoh M."/>
            <person name="Kawasawa Y."/>
            <person name="Kelso J."/>
            <person name="Kitamura H."/>
            <person name="Kitano H."/>
            <person name="Kollias G."/>
            <person name="Krishnan S.P."/>
            <person name="Kruger A."/>
            <person name="Kummerfeld S.K."/>
            <person name="Kurochkin I.V."/>
            <person name="Lareau L.F."/>
            <person name="Lazarevic D."/>
            <person name="Lipovich L."/>
            <person name="Liu J."/>
            <person name="Liuni S."/>
            <person name="McWilliam S."/>
            <person name="Madan Babu M."/>
            <person name="Madera M."/>
            <person name="Marchionni L."/>
            <person name="Matsuda H."/>
            <person name="Matsuzawa S."/>
            <person name="Miki H."/>
            <person name="Mignone F."/>
            <person name="Miyake S."/>
            <person name="Morris K."/>
            <person name="Mottagui-Tabar S."/>
            <person name="Mulder N."/>
            <person name="Nakano N."/>
            <person name="Nakauchi H."/>
            <person name="Ng P."/>
            <person name="Nilsson R."/>
            <person name="Nishiguchi S."/>
            <person name="Nishikawa S."/>
            <person name="Nori F."/>
            <person name="Ohara O."/>
            <person name="Okazaki Y."/>
            <person name="Orlando V."/>
            <person name="Pang K.C."/>
            <person name="Pavan W.J."/>
            <person name="Pavesi G."/>
            <person name="Pesole G."/>
            <person name="Petrovsky N."/>
            <person name="Piazza S."/>
            <person name="Reed J."/>
            <person name="Reid J.F."/>
            <person name="Ring B.Z."/>
            <person name="Ringwald M."/>
            <person name="Rost B."/>
            <person name="Ruan Y."/>
            <person name="Salzberg S.L."/>
            <person name="Sandelin A."/>
            <person name="Schneider C."/>
            <person name="Schoenbach C."/>
            <person name="Sekiguchi K."/>
            <person name="Semple C.A."/>
            <person name="Seno S."/>
            <person name="Sessa L."/>
            <person name="Sheng Y."/>
            <person name="Shibata Y."/>
            <person name="Shimada H."/>
            <person name="Shimada K."/>
            <person name="Silva D."/>
            <person name="Sinclair B."/>
            <person name="Sperling S."/>
            <person name="Stupka E."/>
            <person name="Sugiura K."/>
            <person name="Sultana R."/>
            <person name="Takenaka Y."/>
            <person name="Taki K."/>
            <person name="Tammoja K."/>
            <person name="Tan S.L."/>
            <person name="Tang S."/>
            <person name="Taylor M.S."/>
            <person name="Tegner J."/>
            <person name="Teichmann S.A."/>
            <person name="Ueda H.R."/>
            <person name="van Nimwegen E."/>
            <person name="Verardo R."/>
            <person name="Wei C.L."/>
            <person name="Yagi K."/>
            <person name="Yamanishi H."/>
            <person name="Zabarovsky E."/>
            <person name="Zhu S."/>
            <person name="Zimmer A."/>
            <person name="Hide W."/>
            <person name="Bult C."/>
            <person name="Grimmond S.M."/>
            <person name="Teasdale R.D."/>
            <person name="Liu E.T."/>
            <person name="Brusic V."/>
            <person name="Quackenbush J."/>
            <person name="Wahlestedt C."/>
            <person name="Mattick J.S."/>
            <person name="Hume D.A."/>
            <person name="Kai C."/>
            <person name="Sasaki D."/>
            <person name="Tomaru Y."/>
            <person name="Fukuda S."/>
            <person name="Kanamori-Katayama M."/>
            <person name="Suzuki M."/>
            <person name="Aoki J."/>
            <person name="Arakawa T."/>
            <person name="Iida J."/>
            <person name="Imamura K."/>
            <person name="Itoh M."/>
            <person name="Kato T."/>
            <person name="Kawaji H."/>
            <person name="Kawagashira N."/>
            <person name="Kawashima T."/>
            <person name="Kojima M."/>
            <person name="Kondo S."/>
            <person name="Konno H."/>
            <person name="Nakano K."/>
            <person name="Ninomiya N."/>
            <person name="Nishio T."/>
            <person name="Okada M."/>
            <person name="Plessy C."/>
            <person name="Shibata K."/>
            <person name="Shiraki T."/>
            <person name="Suzuki S."/>
            <person name="Tagami M."/>
            <person name="Waki K."/>
            <person name="Watahiki A."/>
            <person name="Okamura-Oho Y."/>
            <person name="Suzuki H."/>
            <person name="Kawai J."/>
            <person name="Hayashizaki Y."/>
        </authorList>
    </citation>
    <scope>NUCLEOTIDE SEQUENCE [LARGE SCALE MRNA]</scope>
    <source>
        <strain>C57BL/6J</strain>
        <tissue>Skin</tissue>
    </source>
</reference>
<name>BPIFC_MOUSE</name>
<sequence>MRTKQVPVLWACFLLWSLYIASSQTVYPGITARITQRALDYGLQVGMKVLEQLAKEIVIPDLNGSESLKFLKIDYVKYNFSNIKINAFSFPNTSLAFVPGVGIRALSNHGTANISTNWSVKAPLFRDSGAANLFLSGIYFTGIVAFTRNDFGYPALELQDCHVQVSHARVSFFGSLSALYNSFAEPMEKPILKNLNEMVQLCPIAISQVEQFNVNISALEVLTKIDNYTVLDCSLISPPEITENHLDFNLKGAFYPLESLVDPPFTPAPFHLPESRDSMLYIGISEYFFKSASFAHYVSGALGTTLSTREISNYFSQNVQGFGSVLSKIAEIYVLSQPFILQMMATGPPMVNLQRNNFSLEFPAAVIMLTQLDNSTIQPIVSMDFVASTSVGLAILGQKLICSLSLNRFRLSLPENSQRDAKVVRFENILSSILHFGVLPLANTKLQQGFPLPNPYNISFINSDIEVLEGYLLVSSDLAYDTSSKPQPNLNSWGDLNLVHRPWREQPTH</sequence>